<reference key="1">
    <citation type="journal article" date="2005" name="Proc. Natl. Acad. Sci. U.S.A.">
        <title>Whole genome sequence of Staphylococcus saprophyticus reveals the pathogenesis of uncomplicated urinary tract infection.</title>
        <authorList>
            <person name="Kuroda M."/>
            <person name="Yamashita A."/>
            <person name="Hirakawa H."/>
            <person name="Kumano M."/>
            <person name="Morikawa K."/>
            <person name="Higashide M."/>
            <person name="Maruyama A."/>
            <person name="Inose Y."/>
            <person name="Matoba K."/>
            <person name="Toh H."/>
            <person name="Kuhara S."/>
            <person name="Hattori M."/>
            <person name="Ohta T."/>
        </authorList>
    </citation>
    <scope>NUCLEOTIDE SEQUENCE [LARGE SCALE GENOMIC DNA]</scope>
    <source>
        <strain>ATCC 15305 / DSM 20229 / NCIMB 8711 / NCTC 7292 / S-41</strain>
    </source>
</reference>
<sequence>MKLSFHGQSTIYFEANGKKVIVDPFITGNGQSDLDASTLKVDYIILTHGHGDHFGDTIELANRNHATVIGSAELGDYLTTYHNVENVRPMNIGGKAEFDFGNVKFVQAFHSSSLTDENGVPVYLGMPMGLILEIEGKTIYHTGDTGLFSDMKLIADRHPVDVCFIPIGDNFTMGIDDASYAINSFIKPKISVPIHYDTFELIEQDPNKFKQAVSVGEVQILKPGEDVSF</sequence>
<keyword id="KW-0378">Hydrolase</keyword>
<keyword id="KW-1185">Reference proteome</keyword>
<comment type="similarity">
    <text evidence="1">Belongs to the UPF0173 family.</text>
</comment>
<accession>Q49YD6</accession>
<proteinExistence type="inferred from homology"/>
<name>Y1060_STAS1</name>
<evidence type="ECO:0000255" key="1">
    <source>
        <dbReference type="HAMAP-Rule" id="MF_00457"/>
    </source>
</evidence>
<organism>
    <name type="scientific">Staphylococcus saprophyticus subsp. saprophyticus (strain ATCC 15305 / DSM 20229 / NCIMB 8711 / NCTC 7292 / S-41)</name>
    <dbReference type="NCBI Taxonomy" id="342451"/>
    <lineage>
        <taxon>Bacteria</taxon>
        <taxon>Bacillati</taxon>
        <taxon>Bacillota</taxon>
        <taxon>Bacilli</taxon>
        <taxon>Bacillales</taxon>
        <taxon>Staphylococcaceae</taxon>
        <taxon>Staphylococcus</taxon>
    </lineage>
</organism>
<gene>
    <name type="ordered locus">SSP1060</name>
</gene>
<feature type="chain" id="PRO_0000156387" description="UPF0173 metal-dependent hydrolase SSP1060">
    <location>
        <begin position="1"/>
        <end position="229"/>
    </location>
</feature>
<protein>
    <recommendedName>
        <fullName evidence="1">UPF0173 metal-dependent hydrolase SSP1060</fullName>
    </recommendedName>
</protein>
<dbReference type="EMBL" id="AP008934">
    <property type="protein sequence ID" value="BAE18205.1"/>
    <property type="molecule type" value="Genomic_DNA"/>
</dbReference>
<dbReference type="RefSeq" id="WP_011302903.1">
    <property type="nucleotide sequence ID" value="NC_007350.1"/>
</dbReference>
<dbReference type="SMR" id="Q49YD6"/>
<dbReference type="GeneID" id="3615428"/>
<dbReference type="KEGG" id="ssp:SSP1060"/>
<dbReference type="PATRIC" id="fig|342451.11.peg.1059"/>
<dbReference type="eggNOG" id="COG2220">
    <property type="taxonomic scope" value="Bacteria"/>
</dbReference>
<dbReference type="HOGENOM" id="CLU_070010_4_1_9"/>
<dbReference type="OrthoDB" id="9789133at2"/>
<dbReference type="Proteomes" id="UP000006371">
    <property type="component" value="Chromosome"/>
</dbReference>
<dbReference type="GO" id="GO:0016787">
    <property type="term" value="F:hydrolase activity"/>
    <property type="evidence" value="ECO:0007669"/>
    <property type="project" value="UniProtKB-UniRule"/>
</dbReference>
<dbReference type="Gene3D" id="3.60.15.10">
    <property type="entry name" value="Ribonuclease Z/Hydroxyacylglutathione hydrolase-like"/>
    <property type="match status" value="1"/>
</dbReference>
<dbReference type="HAMAP" id="MF_00457">
    <property type="entry name" value="UPF0173"/>
    <property type="match status" value="1"/>
</dbReference>
<dbReference type="InterPro" id="IPR001279">
    <property type="entry name" value="Metallo-B-lactamas"/>
</dbReference>
<dbReference type="InterPro" id="IPR036866">
    <property type="entry name" value="RibonucZ/Hydroxyglut_hydro"/>
</dbReference>
<dbReference type="InterPro" id="IPR022877">
    <property type="entry name" value="UPF0173"/>
</dbReference>
<dbReference type="InterPro" id="IPR050114">
    <property type="entry name" value="UPF0173_UPF0282_UlaG_hydrolase"/>
</dbReference>
<dbReference type="NCBIfam" id="NF001911">
    <property type="entry name" value="PRK00685.1"/>
    <property type="match status" value="1"/>
</dbReference>
<dbReference type="PANTHER" id="PTHR43546:SF3">
    <property type="entry name" value="UPF0173 METAL-DEPENDENT HYDROLASE MJ1163"/>
    <property type="match status" value="1"/>
</dbReference>
<dbReference type="PANTHER" id="PTHR43546">
    <property type="entry name" value="UPF0173 METAL-DEPENDENT HYDROLASE MJ1163-RELATED"/>
    <property type="match status" value="1"/>
</dbReference>
<dbReference type="Pfam" id="PF12706">
    <property type="entry name" value="Lactamase_B_2"/>
    <property type="match status" value="1"/>
</dbReference>
<dbReference type="SMART" id="SM00849">
    <property type="entry name" value="Lactamase_B"/>
    <property type="match status" value="1"/>
</dbReference>
<dbReference type="SUPFAM" id="SSF56281">
    <property type="entry name" value="Metallo-hydrolase/oxidoreductase"/>
    <property type="match status" value="1"/>
</dbReference>